<comment type="function">
    <text evidence="3">Putative baseplate protein.</text>
</comment>
<comment type="subcellular location">
    <subcellularLocation>
        <location evidence="1 3">Virion</location>
    </subcellularLocation>
</comment>
<comment type="similarity">
    <text evidence="3">Belongs to the tevenvirinae baseplate structural protein gp8 family.</text>
</comment>
<accession>P85227</accession>
<accession>A8E292</accession>
<dbReference type="EMBL" id="AP009390">
    <property type="protein sequence ID" value="BAF81308.1"/>
    <property type="molecule type" value="Genomic_DNA"/>
</dbReference>
<dbReference type="RefSeq" id="YP_001504149.1">
    <property type="nucleotide sequence ID" value="NC_009904.1"/>
</dbReference>
<dbReference type="SMR" id="P85227"/>
<dbReference type="KEGG" id="vg:5666497"/>
<dbReference type="OrthoDB" id="9869at10239"/>
<dbReference type="Proteomes" id="UP000001151">
    <property type="component" value="Genome"/>
</dbReference>
<dbReference type="GO" id="GO:0098025">
    <property type="term" value="C:virus tail, baseplate"/>
    <property type="evidence" value="ECO:0007669"/>
    <property type="project" value="UniProtKB-KW"/>
</dbReference>
<dbReference type="Gene3D" id="2.60.340.10">
    <property type="entry name" value="baseplate structural protein gp8, domain 1"/>
    <property type="match status" value="1"/>
</dbReference>
<dbReference type="InterPro" id="IPR036327">
    <property type="entry name" value="Gp8_sf"/>
</dbReference>
<dbReference type="SUPFAM" id="SSF89433">
    <property type="entry name" value="Baseplate structural protein gp8"/>
    <property type="match status" value="1"/>
</dbReference>
<proteinExistence type="evidence at protein level"/>
<reference evidence="4" key="1">
    <citation type="journal article" date="2008" name="Appl. Environ. Microbiol.">
        <title>In silico and in vivo evaluation of bacteriophage phiEF24C, a candidate for treatment of Enterococcus faecalis infections.</title>
        <authorList>
            <person name="Uchiyama J."/>
            <person name="Rashel M."/>
            <person name="Takemura I."/>
            <person name="Wakiguchi H."/>
            <person name="Matsuzaki S."/>
        </authorList>
    </citation>
    <scope>NUCLEOTIDE SEQUENCE [GENOMIC DNA]</scope>
</reference>
<reference evidence="3" key="2">
    <citation type="journal article" date="2008" name="FEMS Microbiol. Lett.">
        <title>Isolation and characterization of a novel Enterococcus faecalis bacteriophage phiEF24C as a therapeutic candidate.</title>
        <authorList>
            <person name="Uchiyama J."/>
            <person name="Rashel M."/>
            <person name="Maeda Y."/>
            <person name="Takemura I."/>
            <person name="Sugihara S."/>
            <person name="Akechi K."/>
            <person name="Muraoka A."/>
            <person name="Wakiguchi H."/>
            <person name="Matsuzaki S."/>
        </authorList>
    </citation>
    <scope>PROTEIN SEQUENCE OF 2-11</scope>
</reference>
<evidence type="ECO:0000269" key="1">
    <source>
    </source>
</evidence>
<evidence type="ECO:0000303" key="2">
    <source>
    </source>
</evidence>
<evidence type="ECO:0000305" key="3"/>
<evidence type="ECO:0000312" key="4">
    <source>
        <dbReference type="EMBL" id="BAF81308.1"/>
    </source>
</evidence>
<sequence>MAIATNNSRVYASLQLKNKQDSMYLAIGKTTPWTNEDAPPAPDPTTTTLTEVIGYKKVARVSLCREYLPSDDSKYPVVSYGSRKFTLIPDEDGYKEQAWMVYVEAEITGDELPTGTFRQVGIHTDLVSKASSEKKALLPTDVTDAGILQFFENRQQQNRTSDVILKEKFIITMENKKSVKQ</sequence>
<gene>
    <name type="ORF">40</name>
</gene>
<keyword id="KW-0903">Direct protein sequencing</keyword>
<keyword id="KW-1185">Reference proteome</keyword>
<keyword id="KW-1226">Viral baseplate protein</keyword>
<keyword id="KW-1227">Viral tail protein</keyword>
<keyword id="KW-0946">Virion</keyword>
<feature type="initiator methionine" description="Removed" evidence="1">
    <location>
        <position position="1"/>
    </location>
</feature>
<feature type="chain" id="PRO_0000302097" description="Virion protein 3" evidence="1">
    <location>
        <begin position="2"/>
        <end position="181"/>
    </location>
</feature>
<protein>
    <recommendedName>
        <fullName evidence="2">Virion protein 3</fullName>
    </recommendedName>
    <alternativeName>
        <fullName evidence="3">Gene product 40</fullName>
        <shortName>gp40</shortName>
    </alternativeName>
</protein>
<organismHost>
    <name type="scientific">Enterococcus faecalis</name>
    <name type="common">Streptococcus faecalis</name>
    <dbReference type="NCBI Taxonomy" id="1351"/>
</organismHost>
<name>BP40_BPPHE</name>
<organism>
    <name type="scientific">Enterococcus phage phiEF24C</name>
    <name type="common">Enterococcus bacteriophage phi-EF24C</name>
    <dbReference type="NCBI Taxonomy" id="442493"/>
    <lineage>
        <taxon>Viruses</taxon>
        <taxon>Duplodnaviria</taxon>
        <taxon>Heunggongvirae</taxon>
        <taxon>Uroviricota</taxon>
        <taxon>Caudoviricetes</taxon>
        <taxon>Herelleviridae</taxon>
        <taxon>Brockvirinae</taxon>
        <taxon>Kochikohdavirus</taxon>
        <taxon>Kochikohdavirus EF24C</taxon>
    </lineage>
</organism>